<evidence type="ECO:0000250" key="1"/>
<evidence type="ECO:0000255" key="2">
    <source>
        <dbReference type="PROSITE-ProRule" id="PRU01188"/>
    </source>
</evidence>
<keyword id="KW-0175">Coiled coil</keyword>
<keyword id="KW-0403">Intermediate filament</keyword>
<keyword id="KW-0416">Keratin</keyword>
<keyword id="KW-1185">Reference proteome</keyword>
<feature type="chain" id="PRO_0000314859" description="Keratin, type I cytoskeletal 40">
    <location>
        <begin position="1"/>
        <end position="431"/>
    </location>
</feature>
<feature type="domain" description="IF rod" evidence="2">
    <location>
        <begin position="89"/>
        <end position="400"/>
    </location>
</feature>
<feature type="region of interest" description="Head">
    <location>
        <begin position="1"/>
        <end position="89"/>
    </location>
</feature>
<feature type="region of interest" description="Coil 1A">
    <location>
        <begin position="90"/>
        <end position="124"/>
    </location>
</feature>
<feature type="region of interest" description="Linker 1">
    <location>
        <begin position="125"/>
        <end position="135"/>
    </location>
</feature>
<feature type="region of interest" description="Coil 1B">
    <location>
        <begin position="136"/>
        <end position="236"/>
    </location>
</feature>
<feature type="region of interest" description="Linker 12">
    <location>
        <begin position="237"/>
        <end position="252"/>
    </location>
</feature>
<feature type="region of interest" description="Coil 2">
    <location>
        <begin position="253"/>
        <end position="396"/>
    </location>
</feature>
<feature type="region of interest" description="Tail">
    <location>
        <begin position="397"/>
        <end position="431"/>
    </location>
</feature>
<feature type="site" description="Stutter">
    <location>
        <position position="338"/>
    </location>
</feature>
<name>K1C40_RAT</name>
<accession>Q6IFW2</accession>
<dbReference type="EMBL" id="AABR03073663">
    <property type="status" value="NOT_ANNOTATED_CDS"/>
    <property type="molecule type" value="Genomic_DNA"/>
</dbReference>
<dbReference type="EMBL" id="BK004036">
    <property type="protein sequence ID" value="DAA04470.1"/>
    <property type="molecule type" value="mRNA"/>
</dbReference>
<dbReference type="RefSeq" id="NP_001008821.1">
    <property type="nucleotide sequence ID" value="NM_001008821.1"/>
</dbReference>
<dbReference type="SMR" id="Q6IFW2"/>
<dbReference type="FunCoup" id="Q6IFW2">
    <property type="interactions" value="213"/>
</dbReference>
<dbReference type="STRING" id="10116.ENSRNOP00000018804"/>
<dbReference type="PhosphoSitePlus" id="Q6IFW2"/>
<dbReference type="jPOST" id="Q6IFW2"/>
<dbReference type="PaxDb" id="10116-ENSRNOP00000018804"/>
<dbReference type="Ensembl" id="ENSRNOT00000018804.5">
    <property type="protein sequence ID" value="ENSRNOP00000018804.4"/>
    <property type="gene ID" value="ENSRNOG00000013896.6"/>
</dbReference>
<dbReference type="GeneID" id="287679"/>
<dbReference type="KEGG" id="rno:287679"/>
<dbReference type="UCSC" id="RGD:1359145">
    <property type="organism name" value="rat"/>
</dbReference>
<dbReference type="AGR" id="RGD:1359145"/>
<dbReference type="CTD" id="125115"/>
<dbReference type="RGD" id="1359145">
    <property type="gene designation" value="Krt40"/>
</dbReference>
<dbReference type="eggNOG" id="ENOG502SHG0">
    <property type="taxonomic scope" value="Eukaryota"/>
</dbReference>
<dbReference type="GeneTree" id="ENSGT00940000161968"/>
<dbReference type="HOGENOM" id="CLU_012560_8_0_1"/>
<dbReference type="InParanoid" id="Q6IFW2"/>
<dbReference type="OMA" id="PCSPESC"/>
<dbReference type="OrthoDB" id="2441647at2759"/>
<dbReference type="PhylomeDB" id="Q6IFW2"/>
<dbReference type="Reactome" id="R-RNO-6805567">
    <property type="pathway name" value="Keratinization"/>
</dbReference>
<dbReference type="Reactome" id="R-RNO-6809371">
    <property type="pathway name" value="Formation of the cornified envelope"/>
</dbReference>
<dbReference type="PRO" id="PR:Q6IFW2"/>
<dbReference type="Proteomes" id="UP000002494">
    <property type="component" value="Chromosome 10"/>
</dbReference>
<dbReference type="Bgee" id="ENSRNOG00000013896">
    <property type="expression patterns" value="Expressed in esophagus and 1 other cell type or tissue"/>
</dbReference>
<dbReference type="GO" id="GO:0005856">
    <property type="term" value="C:cytoskeleton"/>
    <property type="evidence" value="ECO:0000318"/>
    <property type="project" value="GO_Central"/>
</dbReference>
<dbReference type="GO" id="GO:0005882">
    <property type="term" value="C:intermediate filament"/>
    <property type="evidence" value="ECO:0007669"/>
    <property type="project" value="UniProtKB-KW"/>
</dbReference>
<dbReference type="GO" id="GO:0005198">
    <property type="term" value="F:structural molecule activity"/>
    <property type="evidence" value="ECO:0007669"/>
    <property type="project" value="InterPro"/>
</dbReference>
<dbReference type="GO" id="GO:0030855">
    <property type="term" value="P:epithelial cell differentiation"/>
    <property type="evidence" value="ECO:0000318"/>
    <property type="project" value="GO_Central"/>
</dbReference>
<dbReference type="GO" id="GO:0045109">
    <property type="term" value="P:intermediate filament organization"/>
    <property type="evidence" value="ECO:0000318"/>
    <property type="project" value="GO_Central"/>
</dbReference>
<dbReference type="FunFam" id="1.20.5.1160:FF:000002">
    <property type="entry name" value="Type I keratin 10"/>
    <property type="match status" value="1"/>
</dbReference>
<dbReference type="FunFam" id="1.20.5.170:FF:000002">
    <property type="entry name" value="Type I keratin KA11"/>
    <property type="match status" value="1"/>
</dbReference>
<dbReference type="FunFam" id="1.20.5.500:FF:000001">
    <property type="entry name" value="Type II keratin 23"/>
    <property type="match status" value="1"/>
</dbReference>
<dbReference type="Gene3D" id="1.20.5.170">
    <property type="match status" value="1"/>
</dbReference>
<dbReference type="Gene3D" id="1.20.5.500">
    <property type="entry name" value="Single helix bin"/>
    <property type="match status" value="1"/>
</dbReference>
<dbReference type="Gene3D" id="1.20.5.1160">
    <property type="entry name" value="Vasodilator-stimulated phosphoprotein"/>
    <property type="match status" value="1"/>
</dbReference>
<dbReference type="InterPro" id="IPR018039">
    <property type="entry name" value="IF_conserved"/>
</dbReference>
<dbReference type="InterPro" id="IPR039008">
    <property type="entry name" value="IF_rod_dom"/>
</dbReference>
<dbReference type="InterPro" id="IPR002957">
    <property type="entry name" value="Keratin_I"/>
</dbReference>
<dbReference type="PANTHER" id="PTHR23239">
    <property type="entry name" value="INTERMEDIATE FILAMENT"/>
    <property type="match status" value="1"/>
</dbReference>
<dbReference type="PANTHER" id="PTHR23239:SF90">
    <property type="entry name" value="KERATIN, TYPE I CYTOSKELETAL 40"/>
    <property type="match status" value="1"/>
</dbReference>
<dbReference type="Pfam" id="PF00038">
    <property type="entry name" value="Filament"/>
    <property type="match status" value="1"/>
</dbReference>
<dbReference type="PRINTS" id="PR01248">
    <property type="entry name" value="TYPE1KERATIN"/>
</dbReference>
<dbReference type="SMART" id="SM01391">
    <property type="entry name" value="Filament"/>
    <property type="match status" value="1"/>
</dbReference>
<dbReference type="SUPFAM" id="SSF64593">
    <property type="entry name" value="Intermediate filament protein, coiled coil region"/>
    <property type="match status" value="2"/>
</dbReference>
<dbReference type="PROSITE" id="PS00226">
    <property type="entry name" value="IF_ROD_1"/>
    <property type="match status" value="1"/>
</dbReference>
<dbReference type="PROSITE" id="PS51842">
    <property type="entry name" value="IF_ROD_2"/>
    <property type="match status" value="1"/>
</dbReference>
<protein>
    <recommendedName>
        <fullName>Keratin, type I cytoskeletal 40</fullName>
    </recommendedName>
    <alternativeName>
        <fullName>Cytokeratin-40</fullName>
        <shortName>CK-40</shortName>
    </alternativeName>
    <alternativeName>
        <fullName>Keratin-40</fullName>
        <shortName>K40</shortName>
    </alternativeName>
    <alternativeName>
        <fullName>Type I hair keratin Ka36</fullName>
    </alternativeName>
</protein>
<comment type="function">
    <text evidence="1">May play a role in late hair differentiation.</text>
</comment>
<comment type="subunit">
    <text>Heterotetramer of two type I and two type II keratins.</text>
</comment>
<comment type="miscellaneous">
    <text>There are two types of cytoskeletal and microfibrillar keratin, I (acidic) and II (neutral to basic) (40-55 and 56-70 kDa, respectively).</text>
</comment>
<comment type="similarity">
    <text evidence="2">Belongs to the intermediate filament family.</text>
</comment>
<gene>
    <name type="primary">Krt40</name>
    <name type="synonym">Ka36</name>
</gene>
<reference key="1">
    <citation type="journal article" date="2004" name="Nature">
        <title>Genome sequence of the Brown Norway rat yields insights into mammalian evolution.</title>
        <authorList>
            <person name="Gibbs R.A."/>
            <person name="Weinstock G.M."/>
            <person name="Metzker M.L."/>
            <person name="Muzny D.M."/>
            <person name="Sodergren E.J."/>
            <person name="Scherer S."/>
            <person name="Scott G."/>
            <person name="Steffen D."/>
            <person name="Worley K.C."/>
            <person name="Burch P.E."/>
            <person name="Okwuonu G."/>
            <person name="Hines S."/>
            <person name="Lewis L."/>
            <person name="Deramo C."/>
            <person name="Delgado O."/>
            <person name="Dugan-Rocha S."/>
            <person name="Miner G."/>
            <person name="Morgan M."/>
            <person name="Hawes A."/>
            <person name="Gill R."/>
            <person name="Holt R.A."/>
            <person name="Adams M.D."/>
            <person name="Amanatides P.G."/>
            <person name="Baden-Tillson H."/>
            <person name="Barnstead M."/>
            <person name="Chin S."/>
            <person name="Evans C.A."/>
            <person name="Ferriera S."/>
            <person name="Fosler C."/>
            <person name="Glodek A."/>
            <person name="Gu Z."/>
            <person name="Jennings D."/>
            <person name="Kraft C.L."/>
            <person name="Nguyen T."/>
            <person name="Pfannkoch C.M."/>
            <person name="Sitter C."/>
            <person name="Sutton G.G."/>
            <person name="Venter J.C."/>
            <person name="Woodage T."/>
            <person name="Smith D."/>
            <person name="Lee H.-M."/>
            <person name="Gustafson E."/>
            <person name="Cahill P."/>
            <person name="Kana A."/>
            <person name="Doucette-Stamm L."/>
            <person name="Weinstock K."/>
            <person name="Fechtel K."/>
            <person name="Weiss R.B."/>
            <person name="Dunn D.M."/>
            <person name="Green E.D."/>
            <person name="Blakesley R.W."/>
            <person name="Bouffard G.G."/>
            <person name="De Jong P.J."/>
            <person name="Osoegawa K."/>
            <person name="Zhu B."/>
            <person name="Marra M."/>
            <person name="Schein J."/>
            <person name="Bosdet I."/>
            <person name="Fjell C."/>
            <person name="Jones S."/>
            <person name="Krzywinski M."/>
            <person name="Mathewson C."/>
            <person name="Siddiqui A."/>
            <person name="Wye N."/>
            <person name="McPherson J."/>
            <person name="Zhao S."/>
            <person name="Fraser C.M."/>
            <person name="Shetty J."/>
            <person name="Shatsman S."/>
            <person name="Geer K."/>
            <person name="Chen Y."/>
            <person name="Abramzon S."/>
            <person name="Nierman W.C."/>
            <person name="Havlak P.H."/>
            <person name="Chen R."/>
            <person name="Durbin K.J."/>
            <person name="Egan A."/>
            <person name="Ren Y."/>
            <person name="Song X.-Z."/>
            <person name="Li B."/>
            <person name="Liu Y."/>
            <person name="Qin X."/>
            <person name="Cawley S."/>
            <person name="Cooney A.J."/>
            <person name="D'Souza L.M."/>
            <person name="Martin K."/>
            <person name="Wu J.Q."/>
            <person name="Gonzalez-Garay M.L."/>
            <person name="Jackson A.R."/>
            <person name="Kalafus K.J."/>
            <person name="McLeod M.P."/>
            <person name="Milosavljevic A."/>
            <person name="Virk D."/>
            <person name="Volkov A."/>
            <person name="Wheeler D.A."/>
            <person name="Zhang Z."/>
            <person name="Bailey J.A."/>
            <person name="Eichler E.E."/>
            <person name="Tuzun E."/>
            <person name="Birney E."/>
            <person name="Mongin E."/>
            <person name="Ureta-Vidal A."/>
            <person name="Woodwark C."/>
            <person name="Zdobnov E."/>
            <person name="Bork P."/>
            <person name="Suyama M."/>
            <person name="Torrents D."/>
            <person name="Alexandersson M."/>
            <person name="Trask B.J."/>
            <person name="Young J.M."/>
            <person name="Huang H."/>
            <person name="Wang H."/>
            <person name="Xing H."/>
            <person name="Daniels S."/>
            <person name="Gietzen D."/>
            <person name="Schmidt J."/>
            <person name="Stevens K."/>
            <person name="Vitt U."/>
            <person name="Wingrove J."/>
            <person name="Camara F."/>
            <person name="Mar Alba M."/>
            <person name="Abril J.F."/>
            <person name="Guigo R."/>
            <person name="Smit A."/>
            <person name="Dubchak I."/>
            <person name="Rubin E.M."/>
            <person name="Couronne O."/>
            <person name="Poliakov A."/>
            <person name="Huebner N."/>
            <person name="Ganten D."/>
            <person name="Goesele C."/>
            <person name="Hummel O."/>
            <person name="Kreitler T."/>
            <person name="Lee Y.-A."/>
            <person name="Monti J."/>
            <person name="Schulz H."/>
            <person name="Zimdahl H."/>
            <person name="Himmelbauer H."/>
            <person name="Lehrach H."/>
            <person name="Jacob H.J."/>
            <person name="Bromberg S."/>
            <person name="Gullings-Handley J."/>
            <person name="Jensen-Seaman M.I."/>
            <person name="Kwitek A.E."/>
            <person name="Lazar J."/>
            <person name="Pasko D."/>
            <person name="Tonellato P.J."/>
            <person name="Twigger S."/>
            <person name="Ponting C.P."/>
            <person name="Duarte J.M."/>
            <person name="Rice S."/>
            <person name="Goodstadt L."/>
            <person name="Beatson S.A."/>
            <person name="Emes R.D."/>
            <person name="Winter E.E."/>
            <person name="Webber C."/>
            <person name="Brandt P."/>
            <person name="Nyakatura G."/>
            <person name="Adetobi M."/>
            <person name="Chiaromonte F."/>
            <person name="Elnitski L."/>
            <person name="Eswara P."/>
            <person name="Hardison R.C."/>
            <person name="Hou M."/>
            <person name="Kolbe D."/>
            <person name="Makova K."/>
            <person name="Miller W."/>
            <person name="Nekrutenko A."/>
            <person name="Riemer C."/>
            <person name="Schwartz S."/>
            <person name="Taylor J."/>
            <person name="Yang S."/>
            <person name="Zhang Y."/>
            <person name="Lindpaintner K."/>
            <person name="Andrews T.D."/>
            <person name="Caccamo M."/>
            <person name="Clamp M."/>
            <person name="Clarke L."/>
            <person name="Curwen V."/>
            <person name="Durbin R.M."/>
            <person name="Eyras E."/>
            <person name="Searle S.M."/>
            <person name="Cooper G.M."/>
            <person name="Batzoglou S."/>
            <person name="Brudno M."/>
            <person name="Sidow A."/>
            <person name="Stone E.A."/>
            <person name="Payseur B.A."/>
            <person name="Bourque G."/>
            <person name="Lopez-Otin C."/>
            <person name="Puente X.S."/>
            <person name="Chakrabarti K."/>
            <person name="Chatterji S."/>
            <person name="Dewey C."/>
            <person name="Pachter L."/>
            <person name="Bray N."/>
            <person name="Yap V.B."/>
            <person name="Caspi A."/>
            <person name="Tesler G."/>
            <person name="Pevzner P.A."/>
            <person name="Haussler D."/>
            <person name="Roskin K.M."/>
            <person name="Baertsch R."/>
            <person name="Clawson H."/>
            <person name="Furey T.S."/>
            <person name="Hinrichs A.S."/>
            <person name="Karolchik D."/>
            <person name="Kent W.J."/>
            <person name="Rosenbloom K.R."/>
            <person name="Trumbower H."/>
            <person name="Weirauch M."/>
            <person name="Cooper D.N."/>
            <person name="Stenson P.D."/>
            <person name="Ma B."/>
            <person name="Brent M."/>
            <person name="Arumugam M."/>
            <person name="Shteynberg D."/>
            <person name="Copley R.R."/>
            <person name="Taylor M.S."/>
            <person name="Riethman H."/>
            <person name="Mudunuri U."/>
            <person name="Peterson J."/>
            <person name="Guyer M."/>
            <person name="Felsenfeld A."/>
            <person name="Old S."/>
            <person name="Mockrin S."/>
            <person name="Collins F.S."/>
        </authorList>
    </citation>
    <scope>NUCLEOTIDE SEQUENCE [LARGE SCALE GENOMIC DNA]</scope>
    <source>
        <strain>Brown Norway</strain>
    </source>
</reference>
<reference key="2">
    <citation type="journal article" date="2004" name="Eur. J. Cell Biol.">
        <title>Comprehensive analysis of keratin gene clusters in humans and rodents.</title>
        <authorList>
            <person name="Hesse M."/>
            <person name="Zimek A."/>
            <person name="Weber K."/>
            <person name="Magin T.M."/>
        </authorList>
    </citation>
    <scope>IDENTIFICATION</scope>
</reference>
<sequence length="431" mass="48296">MASEGSPDCCSSEPYAGASSCTTASFCPTSTTYLPSTCATSRCQTPSFLCRAHLPAGCLSPCYLTGGCNSPCLVGNCAWCEEGTFNSNEKETMQFLNDRLASYLERVRSLEENNAELECRIREQCEPDATPVCPDYQRYFDTIEELQQKILCTKAENSRLAVQVDNCKLAADDFRSKYESELSLRQLVENDISGLRGILGELTLCKSDLEAHVESLKDDLLCLKKDHEEEVNLLREQLGDRLNVELDTAPTVDLNKVLDEMRCQYERVLANNRRDAEEWFAAQTEELNQQQMSSAEQLQGCQTEMLELKRTANTLEIELQAQQTLTESLECTVAETEAQYSTQLAQMQCLIDSVEHQLAEIRCDLERQNQEYKVLLDTKARLECEINTYRGLLEKEDSRLPCNPGSTASISNSACEPCSAYVICTVENCCA</sequence>
<organism>
    <name type="scientific">Rattus norvegicus</name>
    <name type="common">Rat</name>
    <dbReference type="NCBI Taxonomy" id="10116"/>
    <lineage>
        <taxon>Eukaryota</taxon>
        <taxon>Metazoa</taxon>
        <taxon>Chordata</taxon>
        <taxon>Craniata</taxon>
        <taxon>Vertebrata</taxon>
        <taxon>Euteleostomi</taxon>
        <taxon>Mammalia</taxon>
        <taxon>Eutheria</taxon>
        <taxon>Euarchontoglires</taxon>
        <taxon>Glires</taxon>
        <taxon>Rodentia</taxon>
        <taxon>Myomorpha</taxon>
        <taxon>Muroidea</taxon>
        <taxon>Muridae</taxon>
        <taxon>Murinae</taxon>
        <taxon>Rattus</taxon>
    </lineage>
</organism>
<proteinExistence type="inferred from homology"/>